<reference key="1">
    <citation type="journal article" date="2005" name="Nature">
        <title>The genome of the social amoeba Dictyostelium discoideum.</title>
        <authorList>
            <person name="Eichinger L."/>
            <person name="Pachebat J.A."/>
            <person name="Gloeckner G."/>
            <person name="Rajandream M.A."/>
            <person name="Sucgang R."/>
            <person name="Berriman M."/>
            <person name="Song J."/>
            <person name="Olsen R."/>
            <person name="Szafranski K."/>
            <person name="Xu Q."/>
            <person name="Tunggal B."/>
            <person name="Kummerfeld S."/>
            <person name="Madera M."/>
            <person name="Konfortov B.A."/>
            <person name="Rivero F."/>
            <person name="Bankier A.T."/>
            <person name="Lehmann R."/>
            <person name="Hamlin N."/>
            <person name="Davies R."/>
            <person name="Gaudet P."/>
            <person name="Fey P."/>
            <person name="Pilcher K."/>
            <person name="Chen G."/>
            <person name="Saunders D."/>
            <person name="Sodergren E.J."/>
            <person name="Davis P."/>
            <person name="Kerhornou A."/>
            <person name="Nie X."/>
            <person name="Hall N."/>
            <person name="Anjard C."/>
            <person name="Hemphill L."/>
            <person name="Bason N."/>
            <person name="Farbrother P."/>
            <person name="Desany B."/>
            <person name="Just E."/>
            <person name="Morio T."/>
            <person name="Rost R."/>
            <person name="Churcher C.M."/>
            <person name="Cooper J."/>
            <person name="Haydock S."/>
            <person name="van Driessche N."/>
            <person name="Cronin A."/>
            <person name="Goodhead I."/>
            <person name="Muzny D.M."/>
            <person name="Mourier T."/>
            <person name="Pain A."/>
            <person name="Lu M."/>
            <person name="Harper D."/>
            <person name="Lindsay R."/>
            <person name="Hauser H."/>
            <person name="James K.D."/>
            <person name="Quiles M."/>
            <person name="Madan Babu M."/>
            <person name="Saito T."/>
            <person name="Buchrieser C."/>
            <person name="Wardroper A."/>
            <person name="Felder M."/>
            <person name="Thangavelu M."/>
            <person name="Johnson D."/>
            <person name="Knights A."/>
            <person name="Loulseged H."/>
            <person name="Mungall K.L."/>
            <person name="Oliver K."/>
            <person name="Price C."/>
            <person name="Quail M.A."/>
            <person name="Urushihara H."/>
            <person name="Hernandez J."/>
            <person name="Rabbinowitsch E."/>
            <person name="Steffen D."/>
            <person name="Sanders M."/>
            <person name="Ma J."/>
            <person name="Kohara Y."/>
            <person name="Sharp S."/>
            <person name="Simmonds M.N."/>
            <person name="Spiegler S."/>
            <person name="Tivey A."/>
            <person name="Sugano S."/>
            <person name="White B."/>
            <person name="Walker D."/>
            <person name="Woodward J.R."/>
            <person name="Winckler T."/>
            <person name="Tanaka Y."/>
            <person name="Shaulsky G."/>
            <person name="Schleicher M."/>
            <person name="Weinstock G.M."/>
            <person name="Rosenthal A."/>
            <person name="Cox E.C."/>
            <person name="Chisholm R.L."/>
            <person name="Gibbs R.A."/>
            <person name="Loomis W.F."/>
            <person name="Platzer M."/>
            <person name="Kay R.R."/>
            <person name="Williams J.G."/>
            <person name="Dear P.H."/>
            <person name="Noegel A.A."/>
            <person name="Barrell B.G."/>
            <person name="Kuspa A."/>
        </authorList>
    </citation>
    <scope>NUCLEOTIDE SEQUENCE [LARGE SCALE GENOMIC DNA]</scope>
    <source>
        <strain>AX4</strain>
    </source>
</reference>
<comment type="function">
    <text evidence="1">Catalyzes the reversible transfer of the terminal phosphate group between ATP and AMP. Plays an important role in cellular energy homeostasis and in adenine nucleotide metabolism. Adenylate kinase activity is critical for regulation of the phosphate utilization and the AMP de novo biosynthesis pathways.</text>
</comment>
<comment type="catalytic activity">
    <reaction evidence="1">
        <text>AMP + ATP = 2 ADP</text>
        <dbReference type="Rhea" id="RHEA:12973"/>
        <dbReference type="ChEBI" id="CHEBI:30616"/>
        <dbReference type="ChEBI" id="CHEBI:456215"/>
        <dbReference type="ChEBI" id="CHEBI:456216"/>
        <dbReference type="EC" id="2.7.4.3"/>
    </reaction>
</comment>
<comment type="subunit">
    <text evidence="1">Monomer.</text>
</comment>
<comment type="subcellular location">
    <subcellularLocation>
        <location evidence="1">Cytoplasm</location>
        <location evidence="1">Cytosol</location>
    </subcellularLocation>
    <subcellularLocation>
        <location evidence="1">Mitochondrion intermembrane space</location>
    </subcellularLocation>
    <text evidence="1">Predominantly mitochondrial.</text>
</comment>
<comment type="domain">
    <text evidence="1">Consists of three domains, a large central CORE domain and two small peripheral domains, NMPbind and LID, which undergo movements during catalysis. The LID domain closes over the site of phosphoryl transfer upon ATP binding. Assembling and dissambling the active center during each catalytic cycle provides an effective means to prevent ATP hydrolysis.</text>
</comment>
<comment type="similarity">
    <text evidence="1">Belongs to the adenylate kinase family. AK2 subfamily.</text>
</comment>
<evidence type="ECO:0000255" key="1">
    <source>
        <dbReference type="HAMAP-Rule" id="MF_03168"/>
    </source>
</evidence>
<dbReference type="EC" id="2.7.4.3" evidence="1"/>
<dbReference type="EMBL" id="AAFI02000057">
    <property type="protein sequence ID" value="EAL65517.1"/>
    <property type="molecule type" value="Genomic_DNA"/>
</dbReference>
<dbReference type="RefSeq" id="XP_638872.1">
    <property type="nucleotide sequence ID" value="XM_633780.1"/>
</dbReference>
<dbReference type="SMR" id="Q54QJ9"/>
<dbReference type="FunCoup" id="Q54QJ9">
    <property type="interactions" value="863"/>
</dbReference>
<dbReference type="STRING" id="44689.Q54QJ9"/>
<dbReference type="PaxDb" id="44689-DDB0230096"/>
<dbReference type="EnsemblProtists" id="EAL65517">
    <property type="protein sequence ID" value="EAL65517"/>
    <property type="gene ID" value="DDB_G0283805"/>
</dbReference>
<dbReference type="GeneID" id="8624270"/>
<dbReference type="KEGG" id="ddi:DDB_G0283805"/>
<dbReference type="dictyBase" id="DDB_G0283805">
    <property type="gene designation" value="adkA"/>
</dbReference>
<dbReference type="VEuPathDB" id="AmoebaDB:DDB_G0283805"/>
<dbReference type="eggNOG" id="KOG3078">
    <property type="taxonomic scope" value="Eukaryota"/>
</dbReference>
<dbReference type="HOGENOM" id="CLU_032354_1_0_1"/>
<dbReference type="InParanoid" id="Q54QJ9"/>
<dbReference type="OMA" id="VYHEQTA"/>
<dbReference type="PhylomeDB" id="Q54QJ9"/>
<dbReference type="Reactome" id="R-DDI-499943">
    <property type="pathway name" value="Interconversion of nucleotide di- and triphosphates"/>
</dbReference>
<dbReference type="PRO" id="PR:Q54QJ9"/>
<dbReference type="Proteomes" id="UP000002195">
    <property type="component" value="Chromosome 4"/>
</dbReference>
<dbReference type="GO" id="GO:0005737">
    <property type="term" value="C:cytoplasm"/>
    <property type="evidence" value="ECO:0000250"/>
    <property type="project" value="dictyBase"/>
</dbReference>
<dbReference type="GO" id="GO:0005829">
    <property type="term" value="C:cytosol"/>
    <property type="evidence" value="ECO:0007669"/>
    <property type="project" value="UniProtKB-SubCell"/>
</dbReference>
<dbReference type="GO" id="GO:0005758">
    <property type="term" value="C:mitochondrial intermembrane space"/>
    <property type="evidence" value="ECO:0007669"/>
    <property type="project" value="UniProtKB-SubCell"/>
</dbReference>
<dbReference type="GO" id="GO:0005739">
    <property type="term" value="C:mitochondrion"/>
    <property type="evidence" value="ECO:0000318"/>
    <property type="project" value="GO_Central"/>
</dbReference>
<dbReference type="GO" id="GO:0004017">
    <property type="term" value="F:adenylate kinase activity"/>
    <property type="evidence" value="ECO:0000250"/>
    <property type="project" value="dictyBase"/>
</dbReference>
<dbReference type="GO" id="GO:0005524">
    <property type="term" value="F:ATP binding"/>
    <property type="evidence" value="ECO:0007669"/>
    <property type="project" value="UniProtKB-KW"/>
</dbReference>
<dbReference type="GO" id="GO:0006172">
    <property type="term" value="P:ADP biosynthetic process"/>
    <property type="evidence" value="ECO:0000318"/>
    <property type="project" value="GO_Central"/>
</dbReference>
<dbReference type="GO" id="GO:0046033">
    <property type="term" value="P:AMP metabolic process"/>
    <property type="evidence" value="ECO:0007669"/>
    <property type="project" value="UniProtKB-UniRule"/>
</dbReference>
<dbReference type="GO" id="GO:0046034">
    <property type="term" value="P:ATP metabolic process"/>
    <property type="evidence" value="ECO:0007669"/>
    <property type="project" value="UniProtKB-UniRule"/>
</dbReference>
<dbReference type="GO" id="GO:0006166">
    <property type="term" value="P:purine ribonucleoside salvage"/>
    <property type="evidence" value="ECO:0000250"/>
    <property type="project" value="dictyBase"/>
</dbReference>
<dbReference type="CDD" id="cd01428">
    <property type="entry name" value="ADK"/>
    <property type="match status" value="1"/>
</dbReference>
<dbReference type="FunFam" id="3.40.50.300:FF:000106">
    <property type="entry name" value="Adenylate kinase mitochondrial"/>
    <property type="match status" value="1"/>
</dbReference>
<dbReference type="Gene3D" id="3.40.50.300">
    <property type="entry name" value="P-loop containing nucleotide triphosphate hydrolases"/>
    <property type="match status" value="1"/>
</dbReference>
<dbReference type="HAMAP" id="MF_00235">
    <property type="entry name" value="Adenylate_kinase_Adk"/>
    <property type="match status" value="1"/>
</dbReference>
<dbReference type="HAMAP" id="MF_03168">
    <property type="entry name" value="Adenylate_kinase_AK2"/>
    <property type="match status" value="1"/>
</dbReference>
<dbReference type="InterPro" id="IPR006259">
    <property type="entry name" value="Adenyl_kin_sub"/>
</dbReference>
<dbReference type="InterPro" id="IPR000850">
    <property type="entry name" value="Adenylat/UMP-CMP_kin"/>
</dbReference>
<dbReference type="InterPro" id="IPR033690">
    <property type="entry name" value="Adenylat_kinase_CS"/>
</dbReference>
<dbReference type="InterPro" id="IPR007862">
    <property type="entry name" value="Adenylate_kinase_lid-dom"/>
</dbReference>
<dbReference type="InterPro" id="IPR028587">
    <property type="entry name" value="AK2"/>
</dbReference>
<dbReference type="InterPro" id="IPR027417">
    <property type="entry name" value="P-loop_NTPase"/>
</dbReference>
<dbReference type="NCBIfam" id="TIGR01351">
    <property type="entry name" value="adk"/>
    <property type="match status" value="1"/>
</dbReference>
<dbReference type="NCBIfam" id="NF001380">
    <property type="entry name" value="PRK00279.1-2"/>
    <property type="match status" value="1"/>
</dbReference>
<dbReference type="NCBIfam" id="NF001381">
    <property type="entry name" value="PRK00279.1-3"/>
    <property type="match status" value="1"/>
</dbReference>
<dbReference type="NCBIfam" id="NF011100">
    <property type="entry name" value="PRK14527.1"/>
    <property type="match status" value="1"/>
</dbReference>
<dbReference type="PANTHER" id="PTHR23359">
    <property type="entry name" value="NUCLEOTIDE KINASE"/>
    <property type="match status" value="1"/>
</dbReference>
<dbReference type="Pfam" id="PF00406">
    <property type="entry name" value="ADK"/>
    <property type="match status" value="1"/>
</dbReference>
<dbReference type="Pfam" id="PF05191">
    <property type="entry name" value="ADK_lid"/>
    <property type="match status" value="1"/>
</dbReference>
<dbReference type="PRINTS" id="PR00094">
    <property type="entry name" value="ADENYLTKNASE"/>
</dbReference>
<dbReference type="SUPFAM" id="SSF52540">
    <property type="entry name" value="P-loop containing nucleoside triphosphate hydrolases"/>
    <property type="match status" value="1"/>
</dbReference>
<dbReference type="PROSITE" id="PS00113">
    <property type="entry name" value="ADENYLATE_KINASE"/>
    <property type="match status" value="1"/>
</dbReference>
<gene>
    <name type="primary">adkA</name>
    <name type="ORF">DDB_G0283805</name>
</gene>
<accession>Q54QJ9</accession>
<feature type="chain" id="PRO_0000342150" description="Adenylate kinase">
    <location>
        <begin position="1"/>
        <end position="276"/>
    </location>
</feature>
<feature type="region of interest" description="NMP" evidence="1">
    <location>
        <begin position="58"/>
        <end position="87"/>
    </location>
</feature>
<feature type="region of interest" description="LID" evidence="1">
    <location>
        <begin position="154"/>
        <end position="191"/>
    </location>
</feature>
<feature type="binding site" evidence="1">
    <location>
        <begin position="38"/>
        <end position="43"/>
    </location>
    <ligand>
        <name>ATP</name>
        <dbReference type="ChEBI" id="CHEBI:30616"/>
    </ligand>
</feature>
<feature type="binding site" evidence="1">
    <location>
        <position position="59"/>
    </location>
    <ligand>
        <name>AMP</name>
        <dbReference type="ChEBI" id="CHEBI:456215"/>
    </ligand>
</feature>
<feature type="binding site" evidence="1">
    <location>
        <position position="64"/>
    </location>
    <ligand>
        <name>AMP</name>
        <dbReference type="ChEBI" id="CHEBI:456215"/>
    </ligand>
</feature>
<feature type="binding site" evidence="1">
    <location>
        <begin position="85"/>
        <end position="87"/>
    </location>
    <ligand>
        <name>AMP</name>
        <dbReference type="ChEBI" id="CHEBI:456215"/>
    </ligand>
</feature>
<feature type="binding site" evidence="1">
    <location>
        <begin position="113"/>
        <end position="116"/>
    </location>
    <ligand>
        <name>AMP</name>
        <dbReference type="ChEBI" id="CHEBI:456215"/>
    </ligand>
</feature>
<feature type="binding site" evidence="1">
    <location>
        <position position="120"/>
    </location>
    <ligand>
        <name>AMP</name>
        <dbReference type="ChEBI" id="CHEBI:456215"/>
    </ligand>
</feature>
<feature type="binding site" evidence="1">
    <location>
        <position position="155"/>
    </location>
    <ligand>
        <name>ATP</name>
        <dbReference type="ChEBI" id="CHEBI:30616"/>
    </ligand>
</feature>
<feature type="binding site" evidence="1">
    <location>
        <begin position="164"/>
        <end position="165"/>
    </location>
    <ligand>
        <name>ATP</name>
        <dbReference type="ChEBI" id="CHEBI:30616"/>
    </ligand>
</feature>
<feature type="binding site" evidence="1">
    <location>
        <position position="188"/>
    </location>
    <ligand>
        <name>AMP</name>
        <dbReference type="ChEBI" id="CHEBI:456215"/>
    </ligand>
</feature>
<feature type="binding site" evidence="1">
    <location>
        <position position="199"/>
    </location>
    <ligand>
        <name>AMP</name>
        <dbReference type="ChEBI" id="CHEBI:456215"/>
    </ligand>
</feature>
<feature type="binding site" evidence="1">
    <location>
        <position position="227"/>
    </location>
    <ligand>
        <name>ATP</name>
        <dbReference type="ChEBI" id="CHEBI:30616"/>
    </ligand>
</feature>
<organism>
    <name type="scientific">Dictyostelium discoideum</name>
    <name type="common">Social amoeba</name>
    <dbReference type="NCBI Taxonomy" id="44689"/>
    <lineage>
        <taxon>Eukaryota</taxon>
        <taxon>Amoebozoa</taxon>
        <taxon>Evosea</taxon>
        <taxon>Eumycetozoa</taxon>
        <taxon>Dictyostelia</taxon>
        <taxon>Dictyosteliales</taxon>
        <taxon>Dictyosteliaceae</taxon>
        <taxon>Dictyostelium</taxon>
    </lineage>
</organism>
<name>KAD2_DICDI</name>
<keyword id="KW-0067">ATP-binding</keyword>
<keyword id="KW-0963">Cytoplasm</keyword>
<keyword id="KW-0418">Kinase</keyword>
<keyword id="KW-0496">Mitochondrion</keyword>
<keyword id="KW-0547">Nucleotide-binding</keyword>
<keyword id="KW-1185">Reference proteome</keyword>
<keyword id="KW-0808">Transferase</keyword>
<sequence>MEPQFKVKIDNDSARILKELAEKKRDEGLRVVFIGPPGSGKGTQAPLVKEDYCLCHLSTGDMLRAAIEQGTETGKQAKTIMDQGGLVPDEVMVNMIKENIQTPECKKGFILDGFPRTVPQAEKLDKMLAEDNKKIDHVLDFAIDDSLLVKRITGRLVHPSSGRSYHREFFPPKVDMIDDITGEPLIQRSDDNEEVLKKRLESFHKNTTPVLGYYQNKGILSTIDASKSAPFVSHTIKSIFLSTLHFPHNASIFKTFHQKMKMQVHSTETPLAAEIL</sequence>
<proteinExistence type="inferred from homology"/>
<protein>
    <recommendedName>
        <fullName evidence="1">Adenylate kinase</fullName>
        <ecNumber evidence="1">2.7.4.3</ecNumber>
    </recommendedName>
    <alternativeName>
        <fullName evidence="1">ATP-AMP transphosphorylase</fullName>
    </alternativeName>
    <alternativeName>
        <fullName evidence="1">ATP:AMP phosphotransferase</fullName>
    </alternativeName>
    <alternativeName>
        <fullName evidence="1">Adenylate kinase A</fullName>
    </alternativeName>
    <alternativeName>
        <fullName evidence="1">Adenylate kinase cytosolic and mitochondrial</fullName>
    </alternativeName>
    <alternativeName>
        <fullName evidence="1">Adenylate monophosphate kinase</fullName>
    </alternativeName>
</protein>